<sequence length="250" mass="27921">MGQKVHPIGIRLGVVKRHNANWYANPKQYAEYLLKDLQVREFLTKKLKNAMVSNILIERPSGAAKVTISTARPGIVIGKKGEDIEKLQRELTNIMGVPAQVSINEIDRPDLDARLVAEAIASQLEKRVMFRRAMKRAVQNTMRAGAKGIKVEVSGRLGGAEIARTEWYREGRVPLHTLRADIDYATMRAETTYGTIGVKVWIFRGEILGGMKQVMNPAPAEERPAKRGRGRGEGQERRGRRGDRAADKGE</sequence>
<dbReference type="EMBL" id="CU459141">
    <property type="protein sequence ID" value="CAM85388.1"/>
    <property type="molecule type" value="Genomic_DNA"/>
</dbReference>
<dbReference type="SMR" id="B0V6X4"/>
<dbReference type="EnsemblBacteria" id="CAM85388">
    <property type="protein sequence ID" value="CAM85388"/>
    <property type="gene ID" value="ABAYE0414"/>
</dbReference>
<dbReference type="KEGG" id="aby:ABAYE0414"/>
<dbReference type="HOGENOM" id="CLU_058591_0_2_6"/>
<dbReference type="GO" id="GO:0022627">
    <property type="term" value="C:cytosolic small ribosomal subunit"/>
    <property type="evidence" value="ECO:0007669"/>
    <property type="project" value="TreeGrafter"/>
</dbReference>
<dbReference type="GO" id="GO:0003729">
    <property type="term" value="F:mRNA binding"/>
    <property type="evidence" value="ECO:0007669"/>
    <property type="project" value="UniProtKB-UniRule"/>
</dbReference>
<dbReference type="GO" id="GO:0019843">
    <property type="term" value="F:rRNA binding"/>
    <property type="evidence" value="ECO:0007669"/>
    <property type="project" value="UniProtKB-UniRule"/>
</dbReference>
<dbReference type="GO" id="GO:0003735">
    <property type="term" value="F:structural constituent of ribosome"/>
    <property type="evidence" value="ECO:0007669"/>
    <property type="project" value="InterPro"/>
</dbReference>
<dbReference type="GO" id="GO:0006412">
    <property type="term" value="P:translation"/>
    <property type="evidence" value="ECO:0007669"/>
    <property type="project" value="UniProtKB-UniRule"/>
</dbReference>
<dbReference type="CDD" id="cd02412">
    <property type="entry name" value="KH-II_30S_S3"/>
    <property type="match status" value="1"/>
</dbReference>
<dbReference type="FunFam" id="3.30.1140.32:FF:000001">
    <property type="entry name" value="30S ribosomal protein S3"/>
    <property type="match status" value="1"/>
</dbReference>
<dbReference type="FunFam" id="3.30.300.20:FF:000001">
    <property type="entry name" value="30S ribosomal protein S3"/>
    <property type="match status" value="1"/>
</dbReference>
<dbReference type="Gene3D" id="3.30.300.20">
    <property type="match status" value="1"/>
</dbReference>
<dbReference type="Gene3D" id="3.30.1140.32">
    <property type="entry name" value="Ribosomal protein S3, C-terminal domain"/>
    <property type="match status" value="1"/>
</dbReference>
<dbReference type="HAMAP" id="MF_01309_B">
    <property type="entry name" value="Ribosomal_uS3_B"/>
    <property type="match status" value="1"/>
</dbReference>
<dbReference type="InterPro" id="IPR004087">
    <property type="entry name" value="KH_dom"/>
</dbReference>
<dbReference type="InterPro" id="IPR015946">
    <property type="entry name" value="KH_dom-like_a/b"/>
</dbReference>
<dbReference type="InterPro" id="IPR004044">
    <property type="entry name" value="KH_dom_type_2"/>
</dbReference>
<dbReference type="InterPro" id="IPR009019">
    <property type="entry name" value="KH_sf_prok-type"/>
</dbReference>
<dbReference type="InterPro" id="IPR036419">
    <property type="entry name" value="Ribosomal_S3_C_sf"/>
</dbReference>
<dbReference type="InterPro" id="IPR005704">
    <property type="entry name" value="Ribosomal_uS3_bac-typ"/>
</dbReference>
<dbReference type="InterPro" id="IPR001351">
    <property type="entry name" value="Ribosomal_uS3_C"/>
</dbReference>
<dbReference type="InterPro" id="IPR018280">
    <property type="entry name" value="Ribosomal_uS3_CS"/>
</dbReference>
<dbReference type="NCBIfam" id="TIGR01009">
    <property type="entry name" value="rpsC_bact"/>
    <property type="match status" value="1"/>
</dbReference>
<dbReference type="PANTHER" id="PTHR11760">
    <property type="entry name" value="30S/40S RIBOSOMAL PROTEIN S3"/>
    <property type="match status" value="1"/>
</dbReference>
<dbReference type="PANTHER" id="PTHR11760:SF19">
    <property type="entry name" value="SMALL RIBOSOMAL SUBUNIT PROTEIN US3C"/>
    <property type="match status" value="1"/>
</dbReference>
<dbReference type="Pfam" id="PF07650">
    <property type="entry name" value="KH_2"/>
    <property type="match status" value="1"/>
</dbReference>
<dbReference type="Pfam" id="PF00189">
    <property type="entry name" value="Ribosomal_S3_C"/>
    <property type="match status" value="1"/>
</dbReference>
<dbReference type="SMART" id="SM00322">
    <property type="entry name" value="KH"/>
    <property type="match status" value="1"/>
</dbReference>
<dbReference type="SUPFAM" id="SSF54814">
    <property type="entry name" value="Prokaryotic type KH domain (KH-domain type II)"/>
    <property type="match status" value="1"/>
</dbReference>
<dbReference type="SUPFAM" id="SSF54821">
    <property type="entry name" value="Ribosomal protein S3 C-terminal domain"/>
    <property type="match status" value="1"/>
</dbReference>
<dbReference type="PROSITE" id="PS50823">
    <property type="entry name" value="KH_TYPE_2"/>
    <property type="match status" value="1"/>
</dbReference>
<dbReference type="PROSITE" id="PS00548">
    <property type="entry name" value="RIBOSOMAL_S3"/>
    <property type="match status" value="1"/>
</dbReference>
<evidence type="ECO:0000255" key="1">
    <source>
        <dbReference type="HAMAP-Rule" id="MF_01309"/>
    </source>
</evidence>
<evidence type="ECO:0000256" key="2">
    <source>
        <dbReference type="SAM" id="MobiDB-lite"/>
    </source>
</evidence>
<evidence type="ECO:0000305" key="3"/>
<keyword id="KW-0687">Ribonucleoprotein</keyword>
<keyword id="KW-0689">Ribosomal protein</keyword>
<keyword id="KW-0694">RNA-binding</keyword>
<keyword id="KW-0699">rRNA-binding</keyword>
<comment type="function">
    <text evidence="1">Binds the lower part of the 30S subunit head. Binds mRNA in the 70S ribosome, positioning it for translation.</text>
</comment>
<comment type="subunit">
    <text evidence="1">Part of the 30S ribosomal subunit. Forms a tight complex with proteins S10 and S14.</text>
</comment>
<comment type="similarity">
    <text evidence="1">Belongs to the universal ribosomal protein uS3 family.</text>
</comment>
<reference key="1">
    <citation type="journal article" date="2008" name="PLoS ONE">
        <title>Comparative analysis of Acinetobacters: three genomes for three lifestyles.</title>
        <authorList>
            <person name="Vallenet D."/>
            <person name="Nordmann P."/>
            <person name="Barbe V."/>
            <person name="Poirel L."/>
            <person name="Mangenot S."/>
            <person name="Bataille E."/>
            <person name="Dossat C."/>
            <person name="Gas S."/>
            <person name="Kreimeyer A."/>
            <person name="Lenoble P."/>
            <person name="Oztas S."/>
            <person name="Poulain J."/>
            <person name="Segurens B."/>
            <person name="Robert C."/>
            <person name="Abergel C."/>
            <person name="Claverie J.-M."/>
            <person name="Raoult D."/>
            <person name="Medigue C."/>
            <person name="Weissenbach J."/>
            <person name="Cruveiller S."/>
        </authorList>
    </citation>
    <scope>NUCLEOTIDE SEQUENCE [LARGE SCALE GENOMIC DNA]</scope>
    <source>
        <strain>AYE</strain>
    </source>
</reference>
<protein>
    <recommendedName>
        <fullName evidence="1">Small ribosomal subunit protein uS3</fullName>
    </recommendedName>
    <alternativeName>
        <fullName evidence="3">30S ribosomal protein S3</fullName>
    </alternativeName>
</protein>
<proteinExistence type="inferred from homology"/>
<accession>B0V6X4</accession>
<gene>
    <name evidence="1" type="primary">rpsC</name>
    <name type="ordered locus">ABAYE0414</name>
</gene>
<organism>
    <name type="scientific">Acinetobacter baumannii (strain AYE)</name>
    <dbReference type="NCBI Taxonomy" id="509173"/>
    <lineage>
        <taxon>Bacteria</taxon>
        <taxon>Pseudomonadati</taxon>
        <taxon>Pseudomonadota</taxon>
        <taxon>Gammaproteobacteria</taxon>
        <taxon>Moraxellales</taxon>
        <taxon>Moraxellaceae</taxon>
        <taxon>Acinetobacter</taxon>
        <taxon>Acinetobacter calcoaceticus/baumannii complex</taxon>
    </lineage>
</organism>
<name>RS3_ACIBY</name>
<feature type="chain" id="PRO_1000140916" description="Small ribosomal subunit protein uS3">
    <location>
        <begin position="1"/>
        <end position="250"/>
    </location>
</feature>
<feature type="domain" description="KH type-2" evidence="1">
    <location>
        <begin position="39"/>
        <end position="107"/>
    </location>
</feature>
<feature type="region of interest" description="Disordered" evidence="2">
    <location>
        <begin position="215"/>
        <end position="250"/>
    </location>
</feature>
<feature type="compositionally biased region" description="Basic and acidic residues" evidence="2">
    <location>
        <begin position="220"/>
        <end position="250"/>
    </location>
</feature>